<evidence type="ECO:0000255" key="1">
    <source>
        <dbReference type="HAMAP-Rule" id="MF_00605"/>
    </source>
</evidence>
<gene>
    <name evidence="1" type="primary">trmD</name>
    <name type="ordered locus">MAE_27440</name>
</gene>
<comment type="function">
    <text evidence="1">Specifically methylates guanosine-37 in various tRNAs.</text>
</comment>
<comment type="catalytic activity">
    <reaction evidence="1">
        <text>guanosine(37) in tRNA + S-adenosyl-L-methionine = N(1)-methylguanosine(37) in tRNA + S-adenosyl-L-homocysteine + H(+)</text>
        <dbReference type="Rhea" id="RHEA:36899"/>
        <dbReference type="Rhea" id="RHEA-COMP:10145"/>
        <dbReference type="Rhea" id="RHEA-COMP:10147"/>
        <dbReference type="ChEBI" id="CHEBI:15378"/>
        <dbReference type="ChEBI" id="CHEBI:57856"/>
        <dbReference type="ChEBI" id="CHEBI:59789"/>
        <dbReference type="ChEBI" id="CHEBI:73542"/>
        <dbReference type="ChEBI" id="CHEBI:74269"/>
        <dbReference type="EC" id="2.1.1.228"/>
    </reaction>
</comment>
<comment type="subunit">
    <text evidence="1">Homodimer.</text>
</comment>
<comment type="subcellular location">
    <subcellularLocation>
        <location evidence="1">Cytoplasm</location>
    </subcellularLocation>
</comment>
<comment type="similarity">
    <text evidence="1">Belongs to the RNA methyltransferase TrmD family.</text>
</comment>
<dbReference type="EC" id="2.1.1.228" evidence="1"/>
<dbReference type="EMBL" id="AP009552">
    <property type="protein sequence ID" value="BAG02566.1"/>
    <property type="molecule type" value="Genomic_DNA"/>
</dbReference>
<dbReference type="RefSeq" id="WP_002798887.1">
    <property type="nucleotide sequence ID" value="NC_010296.1"/>
</dbReference>
<dbReference type="SMR" id="B0JJC4"/>
<dbReference type="STRING" id="449447.MAE_27440"/>
<dbReference type="PaxDb" id="449447-MAE_27440"/>
<dbReference type="EnsemblBacteria" id="BAG02566">
    <property type="protein sequence ID" value="BAG02566"/>
    <property type="gene ID" value="MAE_27440"/>
</dbReference>
<dbReference type="GeneID" id="66708806"/>
<dbReference type="KEGG" id="mar:MAE_27440"/>
<dbReference type="eggNOG" id="COG0336">
    <property type="taxonomic scope" value="Bacteria"/>
</dbReference>
<dbReference type="HOGENOM" id="CLU_047363_0_1_3"/>
<dbReference type="BioCyc" id="MAER449447:MAE_RS11970-MONOMER"/>
<dbReference type="Proteomes" id="UP000001510">
    <property type="component" value="Chromosome"/>
</dbReference>
<dbReference type="GO" id="GO:0005829">
    <property type="term" value="C:cytosol"/>
    <property type="evidence" value="ECO:0007669"/>
    <property type="project" value="TreeGrafter"/>
</dbReference>
<dbReference type="GO" id="GO:0052906">
    <property type="term" value="F:tRNA (guanine(37)-N1)-methyltransferase activity"/>
    <property type="evidence" value="ECO:0007669"/>
    <property type="project" value="UniProtKB-UniRule"/>
</dbReference>
<dbReference type="GO" id="GO:0002939">
    <property type="term" value="P:tRNA N1-guanine methylation"/>
    <property type="evidence" value="ECO:0007669"/>
    <property type="project" value="TreeGrafter"/>
</dbReference>
<dbReference type="CDD" id="cd18080">
    <property type="entry name" value="TrmD-like"/>
    <property type="match status" value="1"/>
</dbReference>
<dbReference type="FunFam" id="3.40.1280.10:FF:000001">
    <property type="entry name" value="tRNA (guanine-N(1)-)-methyltransferase"/>
    <property type="match status" value="1"/>
</dbReference>
<dbReference type="Gene3D" id="3.40.1280.10">
    <property type="match status" value="1"/>
</dbReference>
<dbReference type="Gene3D" id="1.10.1270.20">
    <property type="entry name" value="tRNA(m1g37)methyltransferase, domain 2"/>
    <property type="match status" value="1"/>
</dbReference>
<dbReference type="HAMAP" id="MF_00605">
    <property type="entry name" value="TrmD"/>
    <property type="match status" value="1"/>
</dbReference>
<dbReference type="InterPro" id="IPR029028">
    <property type="entry name" value="Alpha/beta_knot_MTases"/>
</dbReference>
<dbReference type="InterPro" id="IPR023148">
    <property type="entry name" value="tRNA_m1G_MeTrfase_C_sf"/>
</dbReference>
<dbReference type="InterPro" id="IPR002649">
    <property type="entry name" value="tRNA_m1G_MeTrfase_TrmD"/>
</dbReference>
<dbReference type="InterPro" id="IPR029026">
    <property type="entry name" value="tRNA_m1G_MTases_N"/>
</dbReference>
<dbReference type="InterPro" id="IPR016009">
    <property type="entry name" value="tRNA_MeTrfase_TRMD/TRM10"/>
</dbReference>
<dbReference type="NCBIfam" id="NF000648">
    <property type="entry name" value="PRK00026.1"/>
    <property type="match status" value="1"/>
</dbReference>
<dbReference type="NCBIfam" id="TIGR00088">
    <property type="entry name" value="trmD"/>
    <property type="match status" value="1"/>
</dbReference>
<dbReference type="PANTHER" id="PTHR46417">
    <property type="entry name" value="TRNA (GUANINE-N(1)-)-METHYLTRANSFERASE"/>
    <property type="match status" value="1"/>
</dbReference>
<dbReference type="PANTHER" id="PTHR46417:SF1">
    <property type="entry name" value="TRNA (GUANINE-N(1)-)-METHYLTRANSFERASE"/>
    <property type="match status" value="1"/>
</dbReference>
<dbReference type="Pfam" id="PF01746">
    <property type="entry name" value="tRNA_m1G_MT"/>
    <property type="match status" value="1"/>
</dbReference>
<dbReference type="PIRSF" id="PIRSF000386">
    <property type="entry name" value="tRNA_mtase"/>
    <property type="match status" value="1"/>
</dbReference>
<dbReference type="SUPFAM" id="SSF75217">
    <property type="entry name" value="alpha/beta knot"/>
    <property type="match status" value="1"/>
</dbReference>
<organism>
    <name type="scientific">Microcystis aeruginosa (strain NIES-843 / IAM M-2473)</name>
    <dbReference type="NCBI Taxonomy" id="449447"/>
    <lineage>
        <taxon>Bacteria</taxon>
        <taxon>Bacillati</taxon>
        <taxon>Cyanobacteriota</taxon>
        <taxon>Cyanophyceae</taxon>
        <taxon>Oscillatoriophycideae</taxon>
        <taxon>Chroococcales</taxon>
        <taxon>Microcystaceae</taxon>
        <taxon>Microcystis</taxon>
    </lineage>
</organism>
<proteinExistence type="inferred from homology"/>
<name>TRMD_MICAN</name>
<protein>
    <recommendedName>
        <fullName evidence="1">tRNA (guanine-N(1)-)-methyltransferase</fullName>
        <ecNumber evidence="1">2.1.1.228</ecNumber>
    </recommendedName>
    <alternativeName>
        <fullName evidence="1">M1G-methyltransferase</fullName>
    </alternativeName>
    <alternativeName>
        <fullName evidence="1">tRNA [GM37] methyltransferase</fullName>
    </alternativeName>
</protein>
<sequence length="231" mass="26380">MQFDIITLFPDFFTSPLQSGLLAKALERDIARVNLVNLRDFAHDKHRRVDDEPYGGGVGMLLKPEPIFEAIESLEILPPREIVLMTPQGEPLHQALLKTWAGSYQQLILICGHYEGVDERVCEHLVTREVSLGDFVLTCGEIPALAIINGVTRLLPGTVGKAESLKLESFEAGLLDYPQYTRPPVFRGWQVPPVLRSGNHQDIADWRYQQQLDRTKERRPDIWQKWLEEQD</sequence>
<reference key="1">
    <citation type="journal article" date="2007" name="DNA Res.">
        <title>Complete genomic structure of the bloom-forming toxic cyanobacterium Microcystis aeruginosa NIES-843.</title>
        <authorList>
            <person name="Kaneko T."/>
            <person name="Nakajima N."/>
            <person name="Okamoto S."/>
            <person name="Suzuki I."/>
            <person name="Tanabe Y."/>
            <person name="Tamaoki M."/>
            <person name="Nakamura Y."/>
            <person name="Kasai F."/>
            <person name="Watanabe A."/>
            <person name="Kawashima K."/>
            <person name="Kishida Y."/>
            <person name="Ono A."/>
            <person name="Shimizu Y."/>
            <person name="Takahashi C."/>
            <person name="Minami C."/>
            <person name="Fujishiro T."/>
            <person name="Kohara M."/>
            <person name="Katoh M."/>
            <person name="Nakazaki N."/>
            <person name="Nakayama S."/>
            <person name="Yamada M."/>
            <person name="Tabata S."/>
            <person name="Watanabe M.M."/>
        </authorList>
    </citation>
    <scope>NUCLEOTIDE SEQUENCE [LARGE SCALE GENOMIC DNA]</scope>
    <source>
        <strain>NIES-843 / IAM M-247</strain>
    </source>
</reference>
<keyword id="KW-0963">Cytoplasm</keyword>
<keyword id="KW-0489">Methyltransferase</keyword>
<keyword id="KW-0949">S-adenosyl-L-methionine</keyword>
<keyword id="KW-0808">Transferase</keyword>
<keyword id="KW-0819">tRNA processing</keyword>
<accession>B0JJC4</accession>
<feature type="chain" id="PRO_1000082525" description="tRNA (guanine-N(1)-)-methyltransferase">
    <location>
        <begin position="1"/>
        <end position="231"/>
    </location>
</feature>
<feature type="binding site" evidence="1">
    <location>
        <position position="112"/>
    </location>
    <ligand>
        <name>S-adenosyl-L-methionine</name>
        <dbReference type="ChEBI" id="CHEBI:59789"/>
    </ligand>
</feature>
<feature type="binding site" evidence="1">
    <location>
        <begin position="132"/>
        <end position="137"/>
    </location>
    <ligand>
        <name>S-adenosyl-L-methionine</name>
        <dbReference type="ChEBI" id="CHEBI:59789"/>
    </ligand>
</feature>